<accession>Q9Z8J4</accession>
<sequence length="327" mass="36760">MDAKMGYIFKVMRWIFCFVACGITFGCTNSGFQNANSRPCILSMNRMIHDCVERVVGNRLATAVLIKGSLDPHAYEMVKGDKDKIAGSAVIFCNGLGLEHTLSLRKHLENNPNSVKLGERLIARGAFVPLEEDGICDPHIWMDLSIWKEAVIEITEVLIEKFPEWSAEFKANSEELVCEMSILDSWAKQCLSTIPENLRYLVSGHNAFSYFTRRYLATPEEVASGAWRSRCISPEGLSPEAQISVRDIMAVVDYINEHDVSVVFPEDTLNQDALKKIVSSLKKSHLVRLAQKPLYSDNVDDNYFSTFKHNVCLITEELGGVALECQR</sequence>
<evidence type="ECO:0000250" key="1">
    <source>
        <dbReference type="UniProtKB" id="Q9S529"/>
    </source>
</evidence>
<evidence type="ECO:0000305" key="2"/>
<gene>
    <name evidence="1" type="primary">ytgA</name>
    <name type="ordered locus">CPn_0349</name>
    <name type="ordered locus">CP_0411</name>
    <name type="ordered locus">CPj0349</name>
    <name type="ordered locus">CpB0356</name>
</gene>
<organism>
    <name type="scientific">Chlamydia pneumoniae</name>
    <name type="common">Chlamydophila pneumoniae</name>
    <dbReference type="NCBI Taxonomy" id="83558"/>
    <lineage>
        <taxon>Bacteria</taxon>
        <taxon>Pseudomonadati</taxon>
        <taxon>Chlamydiota</taxon>
        <taxon>Chlamydiia</taxon>
        <taxon>Chlamydiales</taxon>
        <taxon>Chlamydiaceae</taxon>
        <taxon>Chlamydia/Chlamydophila group</taxon>
        <taxon>Chlamydia</taxon>
    </lineage>
</organism>
<name>YTGA_CHLPN</name>
<comment type="function">
    <text evidence="1">Part of the ATP-binding cassette (ABC) transport system YtgABCD involved in metal import. Binds Fe(2+), Mn(2+) and Ni(2+), with a preference for Fe(2+) and delivers them to the membrane permease for translocation into the cytoplasm.</text>
</comment>
<comment type="subunit">
    <text evidence="1">Monomer.</text>
</comment>
<comment type="subcellular location">
    <subcellularLocation>
        <location evidence="1">Periplasm</location>
    </subcellularLocation>
</comment>
<comment type="similarity">
    <text evidence="2">Belongs to the bacterial solute-binding protein 9 family.</text>
</comment>
<comment type="sequence caution" evidence="2">
    <conflict type="erroneous initiation">
        <sequence resource="EMBL-CDS" id="AAP98287"/>
    </conflict>
</comment>
<keyword id="KW-0408">Iron</keyword>
<keyword id="KW-0479">Metal-binding</keyword>
<keyword id="KW-0574">Periplasm</keyword>
<keyword id="KW-0732">Signal</keyword>
<keyword id="KW-0813">Transport</keyword>
<reference key="1">
    <citation type="journal article" date="1999" name="Nat. Genet.">
        <title>Comparative genomes of Chlamydia pneumoniae and C. trachomatis.</title>
        <authorList>
            <person name="Kalman S."/>
            <person name="Mitchell W.P."/>
            <person name="Marathe R."/>
            <person name="Lammel C.J."/>
            <person name="Fan J."/>
            <person name="Hyman R.W."/>
            <person name="Olinger L."/>
            <person name="Grimwood J."/>
            <person name="Davis R.W."/>
            <person name="Stephens R.S."/>
        </authorList>
    </citation>
    <scope>NUCLEOTIDE SEQUENCE [LARGE SCALE GENOMIC DNA]</scope>
    <source>
        <strain>CWL029</strain>
    </source>
</reference>
<reference key="2">
    <citation type="journal article" date="2000" name="Nucleic Acids Res.">
        <title>Genome sequences of Chlamydia trachomatis MoPn and Chlamydia pneumoniae AR39.</title>
        <authorList>
            <person name="Read T.D."/>
            <person name="Brunham R.C."/>
            <person name="Shen C."/>
            <person name="Gill S.R."/>
            <person name="Heidelberg J.F."/>
            <person name="White O."/>
            <person name="Hickey E.K."/>
            <person name="Peterson J.D."/>
            <person name="Utterback T.R."/>
            <person name="Berry K.J."/>
            <person name="Bass S."/>
            <person name="Linher K.D."/>
            <person name="Weidman J.F."/>
            <person name="Khouri H.M."/>
            <person name="Craven B."/>
            <person name="Bowman C."/>
            <person name="Dodson R.J."/>
            <person name="Gwinn M.L."/>
            <person name="Nelson W.C."/>
            <person name="DeBoy R.T."/>
            <person name="Kolonay J.F."/>
            <person name="McClarty G."/>
            <person name="Salzberg S.L."/>
            <person name="Eisen J.A."/>
            <person name="Fraser C.M."/>
        </authorList>
    </citation>
    <scope>NUCLEOTIDE SEQUENCE [LARGE SCALE GENOMIC DNA]</scope>
    <source>
        <strain>AR39</strain>
    </source>
</reference>
<reference key="3">
    <citation type="journal article" date="2000" name="Nucleic Acids Res.">
        <title>Comparison of whole genome sequences of Chlamydia pneumoniae J138 from Japan and CWL029 from USA.</title>
        <authorList>
            <person name="Shirai M."/>
            <person name="Hirakawa H."/>
            <person name="Kimoto M."/>
            <person name="Tabuchi M."/>
            <person name="Kishi F."/>
            <person name="Ouchi K."/>
            <person name="Shiba T."/>
            <person name="Ishii K."/>
            <person name="Hattori M."/>
            <person name="Kuhara S."/>
            <person name="Nakazawa T."/>
        </authorList>
    </citation>
    <scope>NUCLEOTIDE SEQUENCE [LARGE SCALE GENOMIC DNA]</scope>
    <source>
        <strain>J138</strain>
    </source>
</reference>
<reference key="4">
    <citation type="submission" date="2002-05" db="EMBL/GenBank/DDBJ databases">
        <title>The genome sequence of Chlamydia pneumoniae TW183 and comparison with other Chlamydia strains based on whole genome sequence analysis.</title>
        <authorList>
            <person name="Geng M.M."/>
            <person name="Schuhmacher A."/>
            <person name="Muehldorfer I."/>
            <person name="Bensch K.W."/>
            <person name="Schaefer K.P."/>
            <person name="Schneider S."/>
            <person name="Pohl T."/>
            <person name="Essig A."/>
            <person name="Marre R."/>
            <person name="Melchers K."/>
        </authorList>
    </citation>
    <scope>NUCLEOTIDE SEQUENCE [LARGE SCALE GENOMIC DNA]</scope>
    <source>
        <strain>TW-183</strain>
    </source>
</reference>
<proteinExistence type="inferred from homology"/>
<dbReference type="EMBL" id="AE001363">
    <property type="protein sequence ID" value="AAD18493.1"/>
    <property type="molecule type" value="Genomic_DNA"/>
</dbReference>
<dbReference type="EMBL" id="AE002161">
    <property type="protein sequence ID" value="AAF38255.1"/>
    <property type="molecule type" value="Genomic_DNA"/>
</dbReference>
<dbReference type="EMBL" id="BA000008">
    <property type="protein sequence ID" value="BAA98557.1"/>
    <property type="molecule type" value="Genomic_DNA"/>
</dbReference>
<dbReference type="EMBL" id="AE009440">
    <property type="protein sequence ID" value="AAP98287.1"/>
    <property type="status" value="ALT_INIT"/>
    <property type="molecule type" value="Genomic_DNA"/>
</dbReference>
<dbReference type="PIR" id="C72089">
    <property type="entry name" value="C72089"/>
</dbReference>
<dbReference type="PIR" id="C86534">
    <property type="entry name" value="C86534"/>
</dbReference>
<dbReference type="RefSeq" id="NP_224549.1">
    <property type="nucleotide sequence ID" value="NC_000922.1"/>
</dbReference>
<dbReference type="RefSeq" id="WP_010882992.1">
    <property type="nucleotide sequence ID" value="NZ_CP173416.1"/>
</dbReference>
<dbReference type="SMR" id="Q9Z8J4"/>
<dbReference type="STRING" id="406984.CPK_ORF00856"/>
<dbReference type="KEGG" id="cpa:CP_0411"/>
<dbReference type="KEGG" id="cpj:ytgA"/>
<dbReference type="KEGG" id="cpn:CPn_0349"/>
<dbReference type="KEGG" id="cpt:CpB0356"/>
<dbReference type="PATRIC" id="fig|115713.3.peg.385"/>
<dbReference type="eggNOG" id="COG0803">
    <property type="taxonomic scope" value="Bacteria"/>
</dbReference>
<dbReference type="HOGENOM" id="CLU_016838_1_1_0"/>
<dbReference type="OrthoDB" id="9793396at2"/>
<dbReference type="Proteomes" id="UP000000583">
    <property type="component" value="Chromosome"/>
</dbReference>
<dbReference type="Proteomes" id="UP000000801">
    <property type="component" value="Chromosome"/>
</dbReference>
<dbReference type="GO" id="GO:0042597">
    <property type="term" value="C:periplasmic space"/>
    <property type="evidence" value="ECO:0007669"/>
    <property type="project" value="UniProtKB-SubCell"/>
</dbReference>
<dbReference type="GO" id="GO:0046872">
    <property type="term" value="F:metal ion binding"/>
    <property type="evidence" value="ECO:0007669"/>
    <property type="project" value="UniProtKB-KW"/>
</dbReference>
<dbReference type="GO" id="GO:0007155">
    <property type="term" value="P:cell adhesion"/>
    <property type="evidence" value="ECO:0007669"/>
    <property type="project" value="InterPro"/>
</dbReference>
<dbReference type="GO" id="GO:0030001">
    <property type="term" value="P:metal ion transport"/>
    <property type="evidence" value="ECO:0007669"/>
    <property type="project" value="InterPro"/>
</dbReference>
<dbReference type="CDD" id="cd01016">
    <property type="entry name" value="TroA"/>
    <property type="match status" value="1"/>
</dbReference>
<dbReference type="Gene3D" id="3.40.50.1980">
    <property type="entry name" value="Nitrogenase molybdenum iron protein domain"/>
    <property type="match status" value="2"/>
</dbReference>
<dbReference type="InterPro" id="IPR006129">
    <property type="entry name" value="AdhesinB"/>
</dbReference>
<dbReference type="InterPro" id="IPR050492">
    <property type="entry name" value="Bact_metal-bind_prot9"/>
</dbReference>
<dbReference type="InterPro" id="IPR006128">
    <property type="entry name" value="Lipoprotein_PsaA-like"/>
</dbReference>
<dbReference type="InterPro" id="IPR006127">
    <property type="entry name" value="ZnuA-like"/>
</dbReference>
<dbReference type="PANTHER" id="PTHR42953">
    <property type="entry name" value="HIGH-AFFINITY ZINC UPTAKE SYSTEM PROTEIN ZNUA-RELATED"/>
    <property type="match status" value="1"/>
</dbReference>
<dbReference type="PANTHER" id="PTHR42953:SF1">
    <property type="entry name" value="METAL-BINDING PROTEIN HI_0362-RELATED"/>
    <property type="match status" value="1"/>
</dbReference>
<dbReference type="Pfam" id="PF01297">
    <property type="entry name" value="ZnuA"/>
    <property type="match status" value="1"/>
</dbReference>
<dbReference type="PRINTS" id="PR00691">
    <property type="entry name" value="ADHESINB"/>
</dbReference>
<dbReference type="PRINTS" id="PR00690">
    <property type="entry name" value="ADHESNFAMILY"/>
</dbReference>
<dbReference type="SUPFAM" id="SSF53807">
    <property type="entry name" value="Helical backbone' metal receptor"/>
    <property type="match status" value="1"/>
</dbReference>
<dbReference type="PROSITE" id="PS51257">
    <property type="entry name" value="PROKAR_LIPOPROTEIN"/>
    <property type="match status" value="1"/>
</dbReference>
<protein>
    <recommendedName>
        <fullName evidence="1">Metal-binding protein YtgA</fullName>
    </recommendedName>
</protein>
<feature type="signal peptide" evidence="2">
    <location>
        <begin position="1"/>
        <end position="20"/>
    </location>
</feature>
<feature type="chain" id="PRO_0000031900" description="Metal-binding protein YtgA">
    <location>
        <begin position="21"/>
        <end position="327"/>
    </location>
</feature>
<feature type="binding site" evidence="1">
    <location>
        <position position="73"/>
    </location>
    <ligand>
        <name>Fe(2+)</name>
        <dbReference type="ChEBI" id="CHEBI:29033"/>
    </ligand>
</feature>
<feature type="binding site" evidence="1">
    <location>
        <position position="139"/>
    </location>
    <ligand>
        <name>Fe(2+)</name>
        <dbReference type="ChEBI" id="CHEBI:29033"/>
    </ligand>
</feature>
<feature type="binding site" evidence="1">
    <location>
        <position position="205"/>
    </location>
    <ligand>
        <name>Fe(2+)</name>
        <dbReference type="ChEBI" id="CHEBI:29033"/>
    </ligand>
</feature>
<feature type="binding site" evidence="1">
    <location>
        <position position="297"/>
    </location>
    <ligand>
        <name>Fe(2+)</name>
        <dbReference type="ChEBI" id="CHEBI:29033"/>
    </ligand>
</feature>